<feature type="chain" id="PRO_0000103359" description="DNA polymerase III subunit alpha">
    <location>
        <begin position="1"/>
        <end position="1193"/>
    </location>
</feature>
<reference key="1">
    <citation type="journal article" date="2000" name="Nature">
        <title>The genome sequence of the plant pathogen Xylella fastidiosa.</title>
        <authorList>
            <person name="Simpson A.J.G."/>
            <person name="Reinach F.C."/>
            <person name="Arruda P."/>
            <person name="Abreu F.A."/>
            <person name="Acencio M."/>
            <person name="Alvarenga R."/>
            <person name="Alves L.M.C."/>
            <person name="Araya J.E."/>
            <person name="Baia G.S."/>
            <person name="Baptista C.S."/>
            <person name="Barros M.H."/>
            <person name="Bonaccorsi E.D."/>
            <person name="Bordin S."/>
            <person name="Bove J.M."/>
            <person name="Briones M.R.S."/>
            <person name="Bueno M.R.P."/>
            <person name="Camargo A.A."/>
            <person name="Camargo L.E.A."/>
            <person name="Carraro D.M."/>
            <person name="Carrer H."/>
            <person name="Colauto N.B."/>
            <person name="Colombo C."/>
            <person name="Costa F.F."/>
            <person name="Costa M.C.R."/>
            <person name="Costa-Neto C.M."/>
            <person name="Coutinho L.L."/>
            <person name="Cristofani M."/>
            <person name="Dias-Neto E."/>
            <person name="Docena C."/>
            <person name="El-Dorry H."/>
            <person name="Facincani A.P."/>
            <person name="Ferreira A.J.S."/>
            <person name="Ferreira V.C.A."/>
            <person name="Ferro J.A."/>
            <person name="Fraga J.S."/>
            <person name="Franca S.C."/>
            <person name="Franco M.C."/>
            <person name="Frohme M."/>
            <person name="Furlan L.R."/>
            <person name="Garnier M."/>
            <person name="Goldman G.H."/>
            <person name="Goldman M.H.S."/>
            <person name="Gomes S.L."/>
            <person name="Gruber A."/>
            <person name="Ho P.L."/>
            <person name="Hoheisel J.D."/>
            <person name="Junqueira M.L."/>
            <person name="Kemper E.L."/>
            <person name="Kitajima J.P."/>
            <person name="Krieger J.E."/>
            <person name="Kuramae E.E."/>
            <person name="Laigret F."/>
            <person name="Lambais M.R."/>
            <person name="Leite L.C.C."/>
            <person name="Lemos E.G.M."/>
            <person name="Lemos M.V.F."/>
            <person name="Lopes S.A."/>
            <person name="Lopes C.R."/>
            <person name="Machado J.A."/>
            <person name="Machado M.A."/>
            <person name="Madeira A.M.B.N."/>
            <person name="Madeira H.M.F."/>
            <person name="Marino C.L."/>
            <person name="Marques M.V."/>
            <person name="Martins E.A.L."/>
            <person name="Martins E.M.F."/>
            <person name="Matsukuma A.Y."/>
            <person name="Menck C.F.M."/>
            <person name="Miracca E.C."/>
            <person name="Miyaki C.Y."/>
            <person name="Monteiro-Vitorello C.B."/>
            <person name="Moon D.H."/>
            <person name="Nagai M.A."/>
            <person name="Nascimento A.L.T.O."/>
            <person name="Netto L.E.S."/>
            <person name="Nhani A. Jr."/>
            <person name="Nobrega F.G."/>
            <person name="Nunes L.R."/>
            <person name="Oliveira M.A."/>
            <person name="de Oliveira M.C."/>
            <person name="de Oliveira R.C."/>
            <person name="Palmieri D.A."/>
            <person name="Paris A."/>
            <person name="Peixoto B.R."/>
            <person name="Pereira G.A.G."/>
            <person name="Pereira H.A. Jr."/>
            <person name="Pesquero J.B."/>
            <person name="Quaggio R.B."/>
            <person name="Roberto P.G."/>
            <person name="Rodrigues V."/>
            <person name="de Rosa A.J.M."/>
            <person name="de Rosa V.E. Jr."/>
            <person name="de Sa R.G."/>
            <person name="Santelli R.V."/>
            <person name="Sawasaki H.E."/>
            <person name="da Silva A.C.R."/>
            <person name="da Silva A.M."/>
            <person name="da Silva F.R."/>
            <person name="Silva W.A. Jr."/>
            <person name="da Silveira J.F."/>
            <person name="Silvestri M.L.Z."/>
            <person name="Siqueira W.J."/>
            <person name="de Souza A.A."/>
            <person name="de Souza A.P."/>
            <person name="Terenzi M.F."/>
            <person name="Truffi D."/>
            <person name="Tsai S.M."/>
            <person name="Tsuhako M.H."/>
            <person name="Vallada H."/>
            <person name="Van Sluys M.A."/>
            <person name="Verjovski-Almeida S."/>
            <person name="Vettore A.L."/>
            <person name="Zago M.A."/>
            <person name="Zatz M."/>
            <person name="Meidanis J."/>
            <person name="Setubal J.C."/>
        </authorList>
    </citation>
    <scope>NUCLEOTIDE SEQUENCE [LARGE SCALE GENOMIC DNA]</scope>
    <source>
        <strain>9a5c</strain>
    </source>
</reference>
<organism>
    <name type="scientific">Xylella fastidiosa (strain 9a5c)</name>
    <dbReference type="NCBI Taxonomy" id="160492"/>
    <lineage>
        <taxon>Bacteria</taxon>
        <taxon>Pseudomonadati</taxon>
        <taxon>Pseudomonadota</taxon>
        <taxon>Gammaproteobacteria</taxon>
        <taxon>Lysobacterales</taxon>
        <taxon>Lysobacteraceae</taxon>
        <taxon>Xylella</taxon>
    </lineage>
</organism>
<comment type="function">
    <text evidence="1">DNA polymerase III is a complex, multichain enzyme responsible for most of the replicative synthesis in bacteria. This DNA polymerase also exhibits 3' to 5' exonuclease activity. The alpha chain is the DNA polymerase (By similarity).</text>
</comment>
<comment type="catalytic activity">
    <reaction>
        <text>DNA(n) + a 2'-deoxyribonucleoside 5'-triphosphate = DNA(n+1) + diphosphate</text>
        <dbReference type="Rhea" id="RHEA:22508"/>
        <dbReference type="Rhea" id="RHEA-COMP:17339"/>
        <dbReference type="Rhea" id="RHEA-COMP:17340"/>
        <dbReference type="ChEBI" id="CHEBI:33019"/>
        <dbReference type="ChEBI" id="CHEBI:61560"/>
        <dbReference type="ChEBI" id="CHEBI:173112"/>
        <dbReference type="EC" id="2.7.7.7"/>
    </reaction>
</comment>
<comment type="subunit">
    <text evidence="1">DNA polymerase III contains a core (composed of alpha, epsilon and theta chains) that associates with a tau subunit. This core dimerizes to form the PolIII' complex. PolIII' associates with the gamma complex (composed of gamma, delta, delta', psi and chi chains) and with the beta chain to form the complete DNA polymerase III complex (By similarity).</text>
</comment>
<comment type="subcellular location">
    <subcellularLocation>
        <location evidence="1">Cytoplasm</location>
    </subcellularLocation>
</comment>
<comment type="similarity">
    <text evidence="2">Belongs to the DNA polymerase type-C family. DnaE subfamily.</text>
</comment>
<comment type="sequence caution" evidence="2">
    <conflict type="erroneous initiation">
        <sequence resource="EMBL-CDS" id="AAF83017"/>
    </conflict>
</comment>
<accession>Q9PGU4</accession>
<proteinExistence type="inferred from homology"/>
<sequence>MSTSSFVHLHIHTEFSLADSTIRVPEKPEQAHPKKAKQANLLSRAVELGLPALAVTDLNNLFALIKFYKAAETVGIKPISGADLLIAEPEHTPWGMTLLCRDHAGYLNLSQLISRGWLEGHRPEGGVAVHPDWVRDHHKNLFALIGRHSLAGQLFAKGRADLAEQQLADWQHVFGNGLHLELTRTGRDGEEPFNQFALQVAGIRGIPVIASNDVRFLVPSDFLAHEARVCIASGRMLDDPKRPRTYSEQQYLRSSEEMAALFTDIPDALDNTRTLAQRCNIEMRLGTYFLPNYPVPNDETLDSWIRKQSHEGLEARLLKHPLAPGQTREDYVTRLEFELDTIIKMGFSGYFLIVADFIQWGKQQGIPIGPGRGSGAGSLVAWTLLITDLDPLPYNLLFERFLNPERVSMPDFDIDFCMERRDEVISYVARKYGRERVSQIITYGTMAAKAVVRDVGRVLGFPYGLVDSIAKLIPNTLGITLKDAMGEGETNDNASAELIQRYQAEEDVQELLNLARQLEDLTRNAGKHAGGVVIAPNPLTEFCPLFAEHDENGRGKNPVTQFDKNDVEEVGLVKFDFLGLRTLTIIDWAVKAINKRHARACIDPVDITALPLDDIPTYKDIFASGNTSAVFQFESSGMRRLLKDARPDRFEDLIALVSLYRPGPMDLIPEFTARKHGVQETIYPDPRTKNILKDTYGIMVYQEQVMQMAQIVGGYSLGSADLLRRAMGKKVPAEMAKHREIFREGAAKGGMDAVKADEIFDLMEKFAGYGFNKSHAAAYALVSYQTAWLKRHYPAEFMAATLSSDMDNTDKVVGFLDEARNLNLKVLRPNINHSVYMFEATHADTIQYGLGAIKGVGQSVCEAIVKERLHYGPYTSLLNFCTRVASAKLNRRALEAMIHAGALDELGKNRASVMLQLPEVIKATEQMSRERESGQNPLFGNADPSTPAIQLDLPECEEWPLTRMLNGERETLGLYFSGHPFDPYRKQVKELVGCDLNTSALERILGSQQRGNGEKRTWHPEVNTILAGLVVSVRRKGDSQVFVQLEDGRGRIECSAFSDALAEFGHLLTRDRILIVKGGLREDEFNDGYSLRIRQCWDYTQLCTDYAQRLLLRVDLRTSDAWERIDAILARYRPGNTPLRLDLLLNSTHGPVAGTLDLSGAQSVRIEQSLLDKLQKDPAVSTLKVKYTPPWVQ</sequence>
<keyword id="KW-0963">Cytoplasm</keyword>
<keyword id="KW-0235">DNA replication</keyword>
<keyword id="KW-0239">DNA-directed DNA polymerase</keyword>
<keyword id="KW-0548">Nucleotidyltransferase</keyword>
<keyword id="KW-0808">Transferase</keyword>
<gene>
    <name type="primary">dnaE</name>
    <name type="ordered locus">XF_0204</name>
</gene>
<evidence type="ECO:0000250" key="1"/>
<evidence type="ECO:0000305" key="2"/>
<dbReference type="EC" id="2.7.7.7"/>
<dbReference type="EMBL" id="AE003849">
    <property type="protein sequence ID" value="AAF83017.1"/>
    <property type="status" value="ALT_INIT"/>
    <property type="molecule type" value="Genomic_DNA"/>
</dbReference>
<dbReference type="PIR" id="C82834">
    <property type="entry name" value="C82834"/>
</dbReference>
<dbReference type="RefSeq" id="WP_010892745.1">
    <property type="nucleotide sequence ID" value="NC_002488.3"/>
</dbReference>
<dbReference type="SMR" id="Q9PGU4"/>
<dbReference type="STRING" id="160492.XF_0204"/>
<dbReference type="KEGG" id="xfa:XF_0204"/>
<dbReference type="PATRIC" id="fig|160492.11.peg.216"/>
<dbReference type="eggNOG" id="COG0587">
    <property type="taxonomic scope" value="Bacteria"/>
</dbReference>
<dbReference type="HOGENOM" id="CLU_001600_0_0_6"/>
<dbReference type="Proteomes" id="UP000000812">
    <property type="component" value="Chromosome"/>
</dbReference>
<dbReference type="GO" id="GO:0005737">
    <property type="term" value="C:cytoplasm"/>
    <property type="evidence" value="ECO:0007669"/>
    <property type="project" value="UniProtKB-SubCell"/>
</dbReference>
<dbReference type="GO" id="GO:0008408">
    <property type="term" value="F:3'-5' exonuclease activity"/>
    <property type="evidence" value="ECO:0007669"/>
    <property type="project" value="InterPro"/>
</dbReference>
<dbReference type="GO" id="GO:0003887">
    <property type="term" value="F:DNA-directed DNA polymerase activity"/>
    <property type="evidence" value="ECO:0007669"/>
    <property type="project" value="UniProtKB-KW"/>
</dbReference>
<dbReference type="GO" id="GO:0003676">
    <property type="term" value="F:nucleic acid binding"/>
    <property type="evidence" value="ECO:0007669"/>
    <property type="project" value="InterPro"/>
</dbReference>
<dbReference type="GO" id="GO:0006260">
    <property type="term" value="P:DNA replication"/>
    <property type="evidence" value="ECO:0007669"/>
    <property type="project" value="UniProtKB-KW"/>
</dbReference>
<dbReference type="CDD" id="cd04485">
    <property type="entry name" value="DnaE_OBF"/>
    <property type="match status" value="1"/>
</dbReference>
<dbReference type="CDD" id="cd07433">
    <property type="entry name" value="PHP_PolIIIA_DnaE1"/>
    <property type="match status" value="1"/>
</dbReference>
<dbReference type="Gene3D" id="1.10.150.870">
    <property type="match status" value="1"/>
</dbReference>
<dbReference type="Gene3D" id="1.10.10.1600">
    <property type="entry name" value="Bacterial DNA polymerase III alpha subunit, thumb domain"/>
    <property type="match status" value="1"/>
</dbReference>
<dbReference type="Gene3D" id="3.20.20.140">
    <property type="entry name" value="Metal-dependent hydrolases"/>
    <property type="match status" value="1"/>
</dbReference>
<dbReference type="Gene3D" id="2.40.50.140">
    <property type="entry name" value="Nucleic acid-binding proteins"/>
    <property type="match status" value="1"/>
</dbReference>
<dbReference type="InterPro" id="IPR011708">
    <property type="entry name" value="DNA_pol3_alpha_NTPase_dom"/>
</dbReference>
<dbReference type="InterPro" id="IPR041931">
    <property type="entry name" value="DNA_pol3_alpha_thumb_dom"/>
</dbReference>
<dbReference type="InterPro" id="IPR040982">
    <property type="entry name" value="DNA_pol3_finger"/>
</dbReference>
<dbReference type="InterPro" id="IPR004805">
    <property type="entry name" value="DnaE2/DnaE/PolC"/>
</dbReference>
<dbReference type="InterPro" id="IPR029460">
    <property type="entry name" value="DNAPol_HHH"/>
</dbReference>
<dbReference type="InterPro" id="IPR012340">
    <property type="entry name" value="NA-bd_OB-fold"/>
</dbReference>
<dbReference type="InterPro" id="IPR004365">
    <property type="entry name" value="NA-bd_OB_tRNA"/>
</dbReference>
<dbReference type="InterPro" id="IPR004013">
    <property type="entry name" value="PHP_dom"/>
</dbReference>
<dbReference type="InterPro" id="IPR003141">
    <property type="entry name" value="Pol/His_phosphatase_N"/>
</dbReference>
<dbReference type="InterPro" id="IPR016195">
    <property type="entry name" value="Pol/histidinol_Pase-like"/>
</dbReference>
<dbReference type="InterPro" id="IPR049821">
    <property type="entry name" value="PolIIIA_DnaE1_PHP"/>
</dbReference>
<dbReference type="NCBIfam" id="TIGR00594">
    <property type="entry name" value="polc"/>
    <property type="match status" value="1"/>
</dbReference>
<dbReference type="NCBIfam" id="NF004226">
    <property type="entry name" value="PRK05673.1"/>
    <property type="match status" value="1"/>
</dbReference>
<dbReference type="PANTHER" id="PTHR32294">
    <property type="entry name" value="DNA POLYMERASE III SUBUNIT ALPHA"/>
    <property type="match status" value="1"/>
</dbReference>
<dbReference type="PANTHER" id="PTHR32294:SF0">
    <property type="entry name" value="DNA POLYMERASE III SUBUNIT ALPHA"/>
    <property type="match status" value="1"/>
</dbReference>
<dbReference type="Pfam" id="PF07733">
    <property type="entry name" value="DNA_pol3_alpha"/>
    <property type="match status" value="1"/>
</dbReference>
<dbReference type="Pfam" id="PF17657">
    <property type="entry name" value="DNA_pol3_finger"/>
    <property type="match status" value="1"/>
</dbReference>
<dbReference type="Pfam" id="PF14579">
    <property type="entry name" value="HHH_6"/>
    <property type="match status" value="1"/>
</dbReference>
<dbReference type="Pfam" id="PF02811">
    <property type="entry name" value="PHP"/>
    <property type="match status" value="1"/>
</dbReference>
<dbReference type="Pfam" id="PF01336">
    <property type="entry name" value="tRNA_anti-codon"/>
    <property type="match status" value="1"/>
</dbReference>
<dbReference type="SMART" id="SM00481">
    <property type="entry name" value="POLIIIAc"/>
    <property type="match status" value="1"/>
</dbReference>
<dbReference type="SUPFAM" id="SSF50249">
    <property type="entry name" value="Nucleic acid-binding proteins"/>
    <property type="match status" value="1"/>
</dbReference>
<dbReference type="SUPFAM" id="SSF89550">
    <property type="entry name" value="PHP domain-like"/>
    <property type="match status" value="1"/>
</dbReference>
<protein>
    <recommendedName>
        <fullName>DNA polymerase III subunit alpha</fullName>
        <ecNumber>2.7.7.7</ecNumber>
    </recommendedName>
</protein>
<name>DPO3A_XYLFA</name>